<name>HISZ_BRUC2</name>
<accession>A9MDU5</accession>
<evidence type="ECO:0000255" key="1">
    <source>
        <dbReference type="HAMAP-Rule" id="MF_00125"/>
    </source>
</evidence>
<dbReference type="EMBL" id="CP000873">
    <property type="protein sequence ID" value="ABX63383.1"/>
    <property type="molecule type" value="Genomic_DNA"/>
</dbReference>
<dbReference type="RefSeq" id="WP_005971898.1">
    <property type="nucleotide sequence ID" value="NC_010104.1"/>
</dbReference>
<dbReference type="SMR" id="A9MDU5"/>
<dbReference type="KEGG" id="bcs:BCAN_B0188"/>
<dbReference type="HOGENOM" id="CLU_025113_6_0_5"/>
<dbReference type="UniPathway" id="UPA00031">
    <property type="reaction ID" value="UER00006"/>
</dbReference>
<dbReference type="Proteomes" id="UP000001385">
    <property type="component" value="Chromosome II"/>
</dbReference>
<dbReference type="GO" id="GO:0005737">
    <property type="term" value="C:cytoplasm"/>
    <property type="evidence" value="ECO:0007669"/>
    <property type="project" value="UniProtKB-SubCell"/>
</dbReference>
<dbReference type="GO" id="GO:0004821">
    <property type="term" value="F:histidine-tRNA ligase activity"/>
    <property type="evidence" value="ECO:0007669"/>
    <property type="project" value="TreeGrafter"/>
</dbReference>
<dbReference type="GO" id="GO:0006427">
    <property type="term" value="P:histidyl-tRNA aminoacylation"/>
    <property type="evidence" value="ECO:0007669"/>
    <property type="project" value="TreeGrafter"/>
</dbReference>
<dbReference type="GO" id="GO:0000105">
    <property type="term" value="P:L-histidine biosynthetic process"/>
    <property type="evidence" value="ECO:0007669"/>
    <property type="project" value="UniProtKB-UniRule"/>
</dbReference>
<dbReference type="Gene3D" id="3.30.930.10">
    <property type="entry name" value="Bira Bifunctional Protein, Domain 2"/>
    <property type="match status" value="1"/>
</dbReference>
<dbReference type="HAMAP" id="MF_00125">
    <property type="entry name" value="HisZ"/>
    <property type="match status" value="1"/>
</dbReference>
<dbReference type="InterPro" id="IPR045864">
    <property type="entry name" value="aa-tRNA-synth_II/BPL/LPL"/>
</dbReference>
<dbReference type="InterPro" id="IPR041715">
    <property type="entry name" value="HisRS-like_core"/>
</dbReference>
<dbReference type="InterPro" id="IPR004516">
    <property type="entry name" value="HisRS/HisZ"/>
</dbReference>
<dbReference type="InterPro" id="IPR004517">
    <property type="entry name" value="HisZ"/>
</dbReference>
<dbReference type="NCBIfam" id="NF008948">
    <property type="entry name" value="PRK12295.1-1"/>
    <property type="match status" value="1"/>
</dbReference>
<dbReference type="NCBIfam" id="NF008951">
    <property type="entry name" value="PRK12295.1-4"/>
    <property type="match status" value="1"/>
</dbReference>
<dbReference type="PANTHER" id="PTHR43707:SF1">
    <property type="entry name" value="HISTIDINE--TRNA LIGASE, MITOCHONDRIAL-RELATED"/>
    <property type="match status" value="1"/>
</dbReference>
<dbReference type="PANTHER" id="PTHR43707">
    <property type="entry name" value="HISTIDYL-TRNA SYNTHETASE"/>
    <property type="match status" value="1"/>
</dbReference>
<dbReference type="Pfam" id="PF13393">
    <property type="entry name" value="tRNA-synt_His"/>
    <property type="match status" value="2"/>
</dbReference>
<dbReference type="PIRSF" id="PIRSF001549">
    <property type="entry name" value="His-tRNA_synth"/>
    <property type="match status" value="1"/>
</dbReference>
<dbReference type="SUPFAM" id="SSF55681">
    <property type="entry name" value="Class II aaRS and biotin synthetases"/>
    <property type="match status" value="1"/>
</dbReference>
<sequence>MVGSRTSPIFNALRVELNAREAELVEIPLIQPADPFLDMAGEDLRRRIFLTENENGDSLCLRPEFTIPVCRNHIALNAATPKRYAYLGEVFRQRRDGAAEFLQAGIEDLGAADEAASDARSLADALSCVKAIAPDAPLEIVLGDQSVFAGMLKALGLPQGWRKKLLRSFGDAHSMDLALAELTGTQRRDPLPESLAVLVAEGDEIGLARMLEAEMLEAGISPGAGRTPVEIARRLIEKEDLAATHFPAAALDLLRQFLAIRVSLDTAAVTLRAFAADNALDLGAVLQKFEARADAIAQAGIEMKDIIYDASFGRPLDYYTGLVYEIRDASNRQDGVLAGGGRYDRLLTMLGACEAIPGVGFSIWLDRLQALAGEKQ</sequence>
<comment type="function">
    <text evidence="1">Required for the first step of histidine biosynthesis. May allow the feedback regulation of ATP phosphoribosyltransferase activity by histidine.</text>
</comment>
<comment type="pathway">
    <text evidence="1">Amino-acid biosynthesis; L-histidine biosynthesis; L-histidine from 5-phospho-alpha-D-ribose 1-diphosphate: step 1/9.</text>
</comment>
<comment type="subunit">
    <text evidence="1">Heteromultimer composed of HisG and HisZ subunits.</text>
</comment>
<comment type="subcellular location">
    <subcellularLocation>
        <location evidence="1">Cytoplasm</location>
    </subcellularLocation>
</comment>
<comment type="miscellaneous">
    <text>This function is generally fulfilled by the C-terminal part of HisG, which is missing in some bacteria such as this one.</text>
</comment>
<comment type="similarity">
    <text evidence="1">Belongs to the class-II aminoacyl-tRNA synthetase family. HisZ subfamily.</text>
</comment>
<protein>
    <recommendedName>
        <fullName evidence="1">ATP phosphoribosyltransferase regulatory subunit</fullName>
    </recommendedName>
</protein>
<organism>
    <name type="scientific">Brucella canis (strain ATCC 23365 / NCTC 10854 / RM-666)</name>
    <dbReference type="NCBI Taxonomy" id="483179"/>
    <lineage>
        <taxon>Bacteria</taxon>
        <taxon>Pseudomonadati</taxon>
        <taxon>Pseudomonadota</taxon>
        <taxon>Alphaproteobacteria</taxon>
        <taxon>Hyphomicrobiales</taxon>
        <taxon>Brucellaceae</taxon>
        <taxon>Brucella/Ochrobactrum group</taxon>
        <taxon>Brucella</taxon>
    </lineage>
</organism>
<reference key="1">
    <citation type="submission" date="2007-10" db="EMBL/GenBank/DDBJ databases">
        <title>Brucella canis ATCC 23365 whole genome shotgun sequencing project.</title>
        <authorList>
            <person name="Setubal J.C."/>
            <person name="Bowns C."/>
            <person name="Boyle S."/>
            <person name="Crasta O.R."/>
            <person name="Czar M.J."/>
            <person name="Dharmanolla C."/>
            <person name="Gillespie J.J."/>
            <person name="Kenyon R.W."/>
            <person name="Lu J."/>
            <person name="Mane S."/>
            <person name="Mohapatra S."/>
            <person name="Nagrani S."/>
            <person name="Purkayastha A."/>
            <person name="Rajasimha H.K."/>
            <person name="Shallom J.M."/>
            <person name="Shallom S."/>
            <person name="Shukla M."/>
            <person name="Snyder E.E."/>
            <person name="Sobral B.W."/>
            <person name="Wattam A.R."/>
            <person name="Will R."/>
            <person name="Williams K."/>
            <person name="Yoo H."/>
            <person name="Bruce D."/>
            <person name="Detter C."/>
            <person name="Munk C."/>
            <person name="Brettin T.S."/>
        </authorList>
    </citation>
    <scope>NUCLEOTIDE SEQUENCE [LARGE SCALE GENOMIC DNA]</scope>
    <source>
        <strain>ATCC 23365 / NCTC 10854 / RM-666</strain>
    </source>
</reference>
<gene>
    <name evidence="1" type="primary">hisZ</name>
    <name type="ordered locus">BCAN_B0188</name>
</gene>
<keyword id="KW-0028">Amino-acid biosynthesis</keyword>
<keyword id="KW-0963">Cytoplasm</keyword>
<keyword id="KW-0368">Histidine biosynthesis</keyword>
<keyword id="KW-1185">Reference proteome</keyword>
<feature type="chain" id="PRO_1000076242" description="ATP phosphoribosyltransferase regulatory subunit">
    <location>
        <begin position="1"/>
        <end position="376"/>
    </location>
</feature>
<proteinExistence type="inferred from homology"/>